<evidence type="ECO:0000255" key="1">
    <source>
        <dbReference type="HAMAP-Rule" id="MF_00829"/>
    </source>
</evidence>
<reference key="1">
    <citation type="journal article" date="2007" name="Proc. Natl. Acad. Sci. U.S.A.">
        <title>Genome and proteome of long-chain alkane degrading Geobacillus thermodenitrificans NG80-2 isolated from a deep-subsurface oil reservoir.</title>
        <authorList>
            <person name="Feng L."/>
            <person name="Wang W."/>
            <person name="Cheng J."/>
            <person name="Ren Y."/>
            <person name="Zhao G."/>
            <person name="Gao C."/>
            <person name="Tang Y."/>
            <person name="Liu X."/>
            <person name="Han W."/>
            <person name="Peng X."/>
            <person name="Liu R."/>
            <person name="Wang L."/>
        </authorList>
    </citation>
    <scope>NUCLEOTIDE SEQUENCE [LARGE SCALE GENOMIC DNA]</scope>
    <source>
        <strain>NG80-2</strain>
    </source>
</reference>
<protein>
    <recommendedName>
        <fullName evidence="1">UPF0435 protein GTNG_0390</fullName>
    </recommendedName>
</protein>
<feature type="chain" id="PRO_1000062720" description="UPF0435 protein GTNG_0390">
    <location>
        <begin position="1"/>
        <end position="74"/>
    </location>
</feature>
<name>Y390_GEOTN</name>
<sequence length="74" mass="8905">MDLSKRSAENVEYMIEQLKQKLKVMNFDALKPSHFSEEWYDELKDIYEMVMKRETFSPSEMQAIVEELGNLRKK</sequence>
<gene>
    <name type="ordered locus">GTNG_0390</name>
</gene>
<proteinExistence type="inferred from homology"/>
<dbReference type="EMBL" id="CP000557">
    <property type="protein sequence ID" value="ABO65772.1"/>
    <property type="molecule type" value="Genomic_DNA"/>
</dbReference>
<dbReference type="RefSeq" id="WP_008881203.1">
    <property type="nucleotide sequence ID" value="NC_009328.1"/>
</dbReference>
<dbReference type="SMR" id="A4IKB8"/>
<dbReference type="KEGG" id="gtn:GTNG_0390"/>
<dbReference type="eggNOG" id="COG4840">
    <property type="taxonomic scope" value="Bacteria"/>
</dbReference>
<dbReference type="HOGENOM" id="CLU_199533_1_0_9"/>
<dbReference type="Proteomes" id="UP000001578">
    <property type="component" value="Chromosome"/>
</dbReference>
<dbReference type="HAMAP" id="MF_00829">
    <property type="entry name" value="UPF0435"/>
    <property type="match status" value="1"/>
</dbReference>
<dbReference type="InterPro" id="IPR009507">
    <property type="entry name" value="UPF0435"/>
</dbReference>
<dbReference type="Pfam" id="PF06569">
    <property type="entry name" value="DUF1128"/>
    <property type="match status" value="1"/>
</dbReference>
<organism>
    <name type="scientific">Geobacillus thermodenitrificans (strain NG80-2)</name>
    <dbReference type="NCBI Taxonomy" id="420246"/>
    <lineage>
        <taxon>Bacteria</taxon>
        <taxon>Bacillati</taxon>
        <taxon>Bacillota</taxon>
        <taxon>Bacilli</taxon>
        <taxon>Bacillales</taxon>
        <taxon>Anoxybacillaceae</taxon>
        <taxon>Geobacillus</taxon>
    </lineage>
</organism>
<comment type="similarity">
    <text evidence="1">Belongs to the UPF0435 family.</text>
</comment>
<accession>A4IKB8</accession>